<name>YOGB_SCHPO</name>
<comment type="subcellular location">
    <subcellularLocation>
        <location>Mitochondrion</location>
    </subcellularLocation>
</comment>
<keyword id="KW-0496">Mitochondrion</keyword>
<keyword id="KW-1185">Reference proteome</keyword>
<accession>O74316</accession>
<sequence>MLRKAISTARNFKYPLFNCERRFSYFDMFRSKRKFTSGILTEQLALKLDSELGYVKQVLDETLPKKGYEKALHSFIIHEDPSLNYISALKETAKERIRVTVPVYSSRKSYVQTKPITHSAENENGNETSDELVFFQHSIPAYVQLTNNHGTILCALILCKGMLHFDSISFQSPQNSQAFSSDLRLILQKSQKYTGRKTKHVPASIKSSLLEFLDEQGITVKFMKALISRSWRKENVSYKHWIHNIIGFILPSESSTTKKSDSQ</sequence>
<organism>
    <name type="scientific">Schizosaccharomyces pombe (strain 972 / ATCC 24843)</name>
    <name type="common">Fission yeast</name>
    <dbReference type="NCBI Taxonomy" id="284812"/>
    <lineage>
        <taxon>Eukaryota</taxon>
        <taxon>Fungi</taxon>
        <taxon>Dikarya</taxon>
        <taxon>Ascomycota</taxon>
        <taxon>Taphrinomycotina</taxon>
        <taxon>Schizosaccharomycetes</taxon>
        <taxon>Schizosaccharomycetales</taxon>
        <taxon>Schizosaccharomycetaceae</taxon>
        <taxon>Schizosaccharomyces</taxon>
    </lineage>
</organism>
<dbReference type="EMBL" id="CU329671">
    <property type="protein sequence ID" value="CAA20486.2"/>
    <property type="molecule type" value="Genomic_DNA"/>
</dbReference>
<dbReference type="PIR" id="T39487">
    <property type="entry name" value="T39487"/>
</dbReference>
<dbReference type="RefSeq" id="NP_596251.1">
    <property type="nucleotide sequence ID" value="NM_001022170.2"/>
</dbReference>
<dbReference type="SMR" id="O74316"/>
<dbReference type="BioGRID" id="276680">
    <property type="interactions" value="1"/>
</dbReference>
<dbReference type="PaxDb" id="4896-SPBC15D4.11c.1"/>
<dbReference type="EnsemblFungi" id="SPBC15D4.11c.1">
    <property type="protein sequence ID" value="SPBC15D4.11c.1:pep"/>
    <property type="gene ID" value="SPBC15D4.11c"/>
</dbReference>
<dbReference type="KEGG" id="spo:2540143"/>
<dbReference type="PomBase" id="SPBC15D4.11c"/>
<dbReference type="VEuPathDB" id="FungiDB:SPBC15D4.11c"/>
<dbReference type="HOGENOM" id="CLU_1058292_0_0_1"/>
<dbReference type="InParanoid" id="O74316"/>
<dbReference type="OMA" id="QITKDEG"/>
<dbReference type="PRO" id="PR:O74316"/>
<dbReference type="Proteomes" id="UP000002485">
    <property type="component" value="Chromosome II"/>
</dbReference>
<dbReference type="GO" id="GO:0005759">
    <property type="term" value="C:mitochondrial matrix"/>
    <property type="evidence" value="ECO:0000266"/>
    <property type="project" value="PomBase"/>
</dbReference>
<dbReference type="GO" id="GO:0005739">
    <property type="term" value="C:mitochondrion"/>
    <property type="evidence" value="ECO:0007005"/>
    <property type="project" value="PomBase"/>
</dbReference>
<dbReference type="GO" id="GO:0042256">
    <property type="term" value="P:cytosolic ribosome assembly"/>
    <property type="evidence" value="ECO:0000318"/>
    <property type="project" value="GO_Central"/>
</dbReference>
<dbReference type="GO" id="GO:0000963">
    <property type="term" value="P:mitochondrial RNA processing"/>
    <property type="evidence" value="ECO:0000250"/>
    <property type="project" value="PomBase"/>
</dbReference>
<dbReference type="Gene3D" id="3.10.280.10">
    <property type="entry name" value="Mitochondrial glycoprotein"/>
    <property type="match status" value="1"/>
</dbReference>
<dbReference type="InterPro" id="IPR003428">
    <property type="entry name" value="MAM33"/>
</dbReference>
<dbReference type="InterPro" id="IPR036561">
    <property type="entry name" value="MAM33_sf"/>
</dbReference>
<dbReference type="PANTHER" id="PTHR10826">
    <property type="entry name" value="COMPLEMENT COMPONENT 1"/>
    <property type="match status" value="1"/>
</dbReference>
<dbReference type="PANTHER" id="PTHR10826:SF1">
    <property type="entry name" value="COMPLEMENT COMPONENT 1 Q SUBCOMPONENT-BINDING PROTEIN, MITOCHONDRIAL"/>
    <property type="match status" value="1"/>
</dbReference>
<dbReference type="Pfam" id="PF02330">
    <property type="entry name" value="MAM33"/>
    <property type="match status" value="1"/>
</dbReference>
<dbReference type="SUPFAM" id="SSF54529">
    <property type="entry name" value="Mitochondrial glycoprotein MAM33-like"/>
    <property type="match status" value="1"/>
</dbReference>
<proteinExistence type="predicted"/>
<feature type="chain" id="PRO_0000304023" description="Uncharacterized protein C15D4.11c">
    <location>
        <begin position="1"/>
        <end position="263"/>
    </location>
</feature>
<reference key="1">
    <citation type="journal article" date="2002" name="Nature">
        <title>The genome sequence of Schizosaccharomyces pombe.</title>
        <authorList>
            <person name="Wood V."/>
            <person name="Gwilliam R."/>
            <person name="Rajandream M.A."/>
            <person name="Lyne M.H."/>
            <person name="Lyne R."/>
            <person name="Stewart A."/>
            <person name="Sgouros J.G."/>
            <person name="Peat N."/>
            <person name="Hayles J."/>
            <person name="Baker S.G."/>
            <person name="Basham D."/>
            <person name="Bowman S."/>
            <person name="Brooks K."/>
            <person name="Brown D."/>
            <person name="Brown S."/>
            <person name="Chillingworth T."/>
            <person name="Churcher C.M."/>
            <person name="Collins M."/>
            <person name="Connor R."/>
            <person name="Cronin A."/>
            <person name="Davis P."/>
            <person name="Feltwell T."/>
            <person name="Fraser A."/>
            <person name="Gentles S."/>
            <person name="Goble A."/>
            <person name="Hamlin N."/>
            <person name="Harris D.E."/>
            <person name="Hidalgo J."/>
            <person name="Hodgson G."/>
            <person name="Holroyd S."/>
            <person name="Hornsby T."/>
            <person name="Howarth S."/>
            <person name="Huckle E.J."/>
            <person name="Hunt S."/>
            <person name="Jagels K."/>
            <person name="James K.D."/>
            <person name="Jones L."/>
            <person name="Jones M."/>
            <person name="Leather S."/>
            <person name="McDonald S."/>
            <person name="McLean J."/>
            <person name="Mooney P."/>
            <person name="Moule S."/>
            <person name="Mungall K.L."/>
            <person name="Murphy L.D."/>
            <person name="Niblett D."/>
            <person name="Odell C."/>
            <person name="Oliver K."/>
            <person name="O'Neil S."/>
            <person name="Pearson D."/>
            <person name="Quail M.A."/>
            <person name="Rabbinowitsch E."/>
            <person name="Rutherford K.M."/>
            <person name="Rutter S."/>
            <person name="Saunders D."/>
            <person name="Seeger K."/>
            <person name="Sharp S."/>
            <person name="Skelton J."/>
            <person name="Simmonds M.N."/>
            <person name="Squares R."/>
            <person name="Squares S."/>
            <person name="Stevens K."/>
            <person name="Taylor K."/>
            <person name="Taylor R.G."/>
            <person name="Tivey A."/>
            <person name="Walsh S.V."/>
            <person name="Warren T."/>
            <person name="Whitehead S."/>
            <person name="Woodward J.R."/>
            <person name="Volckaert G."/>
            <person name="Aert R."/>
            <person name="Robben J."/>
            <person name="Grymonprez B."/>
            <person name="Weltjens I."/>
            <person name="Vanstreels E."/>
            <person name="Rieger M."/>
            <person name="Schaefer M."/>
            <person name="Mueller-Auer S."/>
            <person name="Gabel C."/>
            <person name="Fuchs M."/>
            <person name="Duesterhoeft A."/>
            <person name="Fritzc C."/>
            <person name="Holzer E."/>
            <person name="Moestl D."/>
            <person name="Hilbert H."/>
            <person name="Borzym K."/>
            <person name="Langer I."/>
            <person name="Beck A."/>
            <person name="Lehrach H."/>
            <person name="Reinhardt R."/>
            <person name="Pohl T.M."/>
            <person name="Eger P."/>
            <person name="Zimmermann W."/>
            <person name="Wedler H."/>
            <person name="Wambutt R."/>
            <person name="Purnelle B."/>
            <person name="Goffeau A."/>
            <person name="Cadieu E."/>
            <person name="Dreano S."/>
            <person name="Gloux S."/>
            <person name="Lelaure V."/>
            <person name="Mottier S."/>
            <person name="Galibert F."/>
            <person name="Aves S.J."/>
            <person name="Xiang Z."/>
            <person name="Hunt C."/>
            <person name="Moore K."/>
            <person name="Hurst S.M."/>
            <person name="Lucas M."/>
            <person name="Rochet M."/>
            <person name="Gaillardin C."/>
            <person name="Tallada V.A."/>
            <person name="Garzon A."/>
            <person name="Thode G."/>
            <person name="Daga R.R."/>
            <person name="Cruzado L."/>
            <person name="Jimenez J."/>
            <person name="Sanchez M."/>
            <person name="del Rey F."/>
            <person name="Benito J."/>
            <person name="Dominguez A."/>
            <person name="Revuelta J.L."/>
            <person name="Moreno S."/>
            <person name="Armstrong J."/>
            <person name="Forsburg S.L."/>
            <person name="Cerutti L."/>
            <person name="Lowe T."/>
            <person name="McCombie W.R."/>
            <person name="Paulsen I."/>
            <person name="Potashkin J."/>
            <person name="Shpakovski G.V."/>
            <person name="Ussery D."/>
            <person name="Barrell B.G."/>
            <person name="Nurse P."/>
        </authorList>
    </citation>
    <scope>NUCLEOTIDE SEQUENCE [LARGE SCALE GENOMIC DNA]</scope>
    <source>
        <strain>972 / ATCC 24843</strain>
    </source>
</reference>
<protein>
    <recommendedName>
        <fullName>Uncharacterized protein C15D4.11c</fullName>
    </recommendedName>
</protein>
<gene>
    <name type="ORF">SPBC15D4.11c</name>
</gene>